<sequence>MASKVQLVFLFLFLCAMWASPSAASRDEPNDPMMKRFEEWMAEYGRVYKDDDEKMRRFQIFKNNVKHIETFNSRNENSYTLGINQFTDMTKSEFVAQYTGVSLPLNIEREPVVSFDDVNISAVPQSIDWRDYGAVNEVKNQNPCGSCWSFAAIATVEGIYKIKTGYLVSLSEQEVLDCAVSYGCKGGWVNKAYDFIISNNGVTTEENYPYLAYQGTCNANSFPNSAYITGYSYVRRNDERSMMYAVSNQPIAALIDASENFQYYNGGVFSGPCGTSLNHAITIIGYGQDSSGTKYWIVRNSWGSSWGEGGYVRMARGVSSSSGVCGIAMAPLFPTLQSGANAEVIKMVSET</sequence>
<protein>
    <recommendedName>
        <fullName>Fruit bromelain</fullName>
        <ecNumber evidence="9">3.4.22.33</ecNumber>
    </recommendedName>
    <allergenName>Ana c 2</allergenName>
</protein>
<evidence type="ECO:0000250" key="1">
    <source>
        <dbReference type="UniProtKB" id="P00785"/>
    </source>
</evidence>
<evidence type="ECO:0000250" key="2">
    <source>
        <dbReference type="UniProtKB" id="P07858"/>
    </source>
</evidence>
<evidence type="ECO:0000250" key="3">
    <source>
        <dbReference type="UniProtKB" id="P25250"/>
    </source>
</evidence>
<evidence type="ECO:0000255" key="4"/>
<evidence type="ECO:0000255" key="5">
    <source>
        <dbReference type="PROSITE-ProRule" id="PRU00498"/>
    </source>
</evidence>
<evidence type="ECO:0000255" key="6">
    <source>
        <dbReference type="PROSITE-ProRule" id="PRU10088"/>
    </source>
</evidence>
<evidence type="ECO:0000255" key="7">
    <source>
        <dbReference type="PROSITE-ProRule" id="PRU10089"/>
    </source>
</evidence>
<evidence type="ECO:0000255" key="8">
    <source>
        <dbReference type="PROSITE-ProRule" id="PRU10090"/>
    </source>
</evidence>
<evidence type="ECO:0000305" key="9"/>
<keyword id="KW-0020">Allergen</keyword>
<keyword id="KW-1015">Disulfide bond</keyword>
<keyword id="KW-0325">Glycoprotein</keyword>
<keyword id="KW-0378">Hydrolase</keyword>
<keyword id="KW-0645">Protease</keyword>
<keyword id="KW-0732">Signal</keyword>
<keyword id="KW-0788">Thiol protease</keyword>
<keyword id="KW-0865">Zymogen</keyword>
<organism>
    <name type="scientific">Ananas comosus</name>
    <name type="common">Pineapple</name>
    <name type="synonym">Ananas ananas</name>
    <dbReference type="NCBI Taxonomy" id="4615"/>
    <lineage>
        <taxon>Eukaryota</taxon>
        <taxon>Viridiplantae</taxon>
        <taxon>Streptophyta</taxon>
        <taxon>Embryophyta</taxon>
        <taxon>Tracheophyta</taxon>
        <taxon>Spermatophyta</taxon>
        <taxon>Magnoliopsida</taxon>
        <taxon>Liliopsida</taxon>
        <taxon>Poales</taxon>
        <taxon>Bromeliaceae</taxon>
        <taxon>Bromelioideae</taxon>
        <taxon>Ananas</taxon>
    </lineage>
</organism>
<comment type="function">
    <text evidence="9">Cysteine proteinase with a high level of diversity in substrate specificity.</text>
</comment>
<comment type="catalytic activity">
    <reaction evidence="9">
        <text>Hydrolysis of proteins with broad specificity for peptide bonds. Bz-Phe-Val-Arg-|-NHMec is a good synthetic substrate, but there is no action on Z-Arg-Arg-|-NHMec (cf. stem bromelain).</text>
        <dbReference type="EC" id="3.4.22.33"/>
    </reaction>
</comment>
<comment type="allergen">
    <text>Causes an allergic reaction in human.</text>
</comment>
<comment type="similarity">
    <text evidence="6 7 8">Belongs to the peptidase C1 family.</text>
</comment>
<dbReference type="EC" id="3.4.22.33" evidence="9"/>
<dbReference type="EMBL" id="D14059">
    <property type="protein sequence ID" value="BAA21849.1"/>
    <property type="molecule type" value="mRNA"/>
</dbReference>
<dbReference type="PIR" id="T10503">
    <property type="entry name" value="T10503"/>
</dbReference>
<dbReference type="SMR" id="O23791"/>
<dbReference type="Allergome" id="3076">
    <property type="allergen name" value="Ana c 2.0101"/>
</dbReference>
<dbReference type="Allergome" id="694">
    <property type="allergen name" value="Ana c 2"/>
</dbReference>
<dbReference type="MEROPS" id="C01.028"/>
<dbReference type="OrthoDB" id="190265at2759"/>
<dbReference type="BRENDA" id="3.4.22.33">
    <property type="organism ID" value="333"/>
</dbReference>
<dbReference type="Proteomes" id="UP000515123">
    <property type="component" value="Unplaced"/>
</dbReference>
<dbReference type="GO" id="GO:0008234">
    <property type="term" value="F:cysteine-type peptidase activity"/>
    <property type="evidence" value="ECO:0007669"/>
    <property type="project" value="UniProtKB-KW"/>
</dbReference>
<dbReference type="GO" id="GO:0006508">
    <property type="term" value="P:proteolysis"/>
    <property type="evidence" value="ECO:0007669"/>
    <property type="project" value="UniProtKB-KW"/>
</dbReference>
<dbReference type="CDD" id="cd02248">
    <property type="entry name" value="Peptidase_C1A"/>
    <property type="match status" value="1"/>
</dbReference>
<dbReference type="FunFam" id="3.90.70.10:FF:000067">
    <property type="entry name" value="Senescence-specific cysteine protease"/>
    <property type="match status" value="1"/>
</dbReference>
<dbReference type="Gene3D" id="3.90.70.10">
    <property type="entry name" value="Cysteine proteinases"/>
    <property type="match status" value="1"/>
</dbReference>
<dbReference type="InterPro" id="IPR038765">
    <property type="entry name" value="Papain-like_cys_pep_sf"/>
</dbReference>
<dbReference type="InterPro" id="IPR025661">
    <property type="entry name" value="Pept_asp_AS"/>
</dbReference>
<dbReference type="InterPro" id="IPR000169">
    <property type="entry name" value="Pept_cys_AS"/>
</dbReference>
<dbReference type="InterPro" id="IPR025660">
    <property type="entry name" value="Pept_his_AS"/>
</dbReference>
<dbReference type="InterPro" id="IPR013128">
    <property type="entry name" value="Peptidase_C1A"/>
</dbReference>
<dbReference type="InterPro" id="IPR000668">
    <property type="entry name" value="Peptidase_C1A_C"/>
</dbReference>
<dbReference type="InterPro" id="IPR039417">
    <property type="entry name" value="Peptidase_C1A_papain-like"/>
</dbReference>
<dbReference type="InterPro" id="IPR013201">
    <property type="entry name" value="Prot_inhib_I29"/>
</dbReference>
<dbReference type="PANTHER" id="PTHR12411">
    <property type="entry name" value="CYSTEINE PROTEASE FAMILY C1-RELATED"/>
    <property type="match status" value="1"/>
</dbReference>
<dbReference type="Pfam" id="PF08246">
    <property type="entry name" value="Inhibitor_I29"/>
    <property type="match status" value="1"/>
</dbReference>
<dbReference type="Pfam" id="PF00112">
    <property type="entry name" value="Peptidase_C1"/>
    <property type="match status" value="1"/>
</dbReference>
<dbReference type="PRINTS" id="PR00705">
    <property type="entry name" value="PAPAIN"/>
</dbReference>
<dbReference type="SMART" id="SM00848">
    <property type="entry name" value="Inhibitor_I29"/>
    <property type="match status" value="1"/>
</dbReference>
<dbReference type="SMART" id="SM00645">
    <property type="entry name" value="Pept_C1"/>
    <property type="match status" value="1"/>
</dbReference>
<dbReference type="SUPFAM" id="SSF54001">
    <property type="entry name" value="Cysteine proteinases"/>
    <property type="match status" value="1"/>
</dbReference>
<dbReference type="PROSITE" id="PS00640">
    <property type="entry name" value="THIOL_PROTEASE_ASN"/>
    <property type="match status" value="1"/>
</dbReference>
<dbReference type="PROSITE" id="PS00139">
    <property type="entry name" value="THIOL_PROTEASE_CYS"/>
    <property type="match status" value="1"/>
</dbReference>
<dbReference type="PROSITE" id="PS00639">
    <property type="entry name" value="THIOL_PROTEASE_HIS"/>
    <property type="match status" value="1"/>
</dbReference>
<name>BROM1_ANACO</name>
<accession>O23791</accession>
<feature type="signal peptide" evidence="4">
    <location>
        <begin position="1"/>
        <end position="24"/>
    </location>
</feature>
<feature type="propeptide" id="PRO_0000045809" description="Activation peptide" evidence="1">
    <location>
        <begin position="25"/>
        <end position="121"/>
    </location>
</feature>
<feature type="chain" id="PRO_0000045810" description="Fruit bromelain">
    <location>
        <begin position="122"/>
        <end position="351"/>
    </location>
</feature>
<feature type="active site" evidence="6">
    <location>
        <position position="147"/>
    </location>
</feature>
<feature type="active site" evidence="7">
    <location>
        <position position="279"/>
    </location>
</feature>
<feature type="active site" evidence="8">
    <location>
        <position position="300"/>
    </location>
</feature>
<feature type="glycosylation site" description="N-linked (GlcNAc...) asparagine" evidence="5">
    <location>
        <position position="119"/>
    </location>
</feature>
<feature type="disulfide bond" evidence="2">
    <location>
        <begin position="144"/>
        <end position="184"/>
    </location>
</feature>
<feature type="disulfide bond" evidence="3">
    <location>
        <begin position="178"/>
        <end position="217"/>
    </location>
</feature>
<feature type="disulfide bond" evidence="3">
    <location>
        <begin position="273"/>
        <end position="325"/>
    </location>
</feature>
<reference key="1">
    <citation type="submission" date="1993-01" db="EMBL/GenBank/DDBJ databases">
        <title>Cloning and sequencing of fruit bromelain.</title>
        <authorList>
            <person name="Muta E."/>
            <person name="Aramaki H."/>
            <person name="Takata Y."/>
            <person name="Kono A."/>
            <person name="Okamoto Y."/>
            <person name="Ota S."/>
        </authorList>
    </citation>
    <scope>NUCLEOTIDE SEQUENCE [MRNA]</scope>
    <source>
        <strain>cv. N67-10</strain>
        <tissue>Fruit</tissue>
    </source>
</reference>
<proteinExistence type="evidence at protein level"/>